<keyword id="KW-0007">Acetylation</keyword>
<keyword id="KW-0903">Direct protein sequencing</keyword>
<keyword id="KW-0349">Heme</keyword>
<keyword id="KW-0408">Iron</keyword>
<keyword id="KW-0479">Metal-binding</keyword>
<keyword id="KW-0561">Oxygen transport</keyword>
<keyword id="KW-0597">Phosphoprotein</keyword>
<keyword id="KW-0813">Transport</keyword>
<gene>
    <name type="primary">HBA</name>
</gene>
<organism>
    <name type="scientific">Taphozous georgianus</name>
    <name type="common">Sharp-nosed tomb bat</name>
    <name type="synonym">Taphozous australis georgianus</name>
    <dbReference type="NCBI Taxonomy" id="13281"/>
    <lineage>
        <taxon>Eukaryota</taxon>
        <taxon>Metazoa</taxon>
        <taxon>Chordata</taxon>
        <taxon>Craniata</taxon>
        <taxon>Vertebrata</taxon>
        <taxon>Euteleostomi</taxon>
        <taxon>Mammalia</taxon>
        <taxon>Eutheria</taxon>
        <taxon>Laurasiatheria</taxon>
        <taxon>Chiroptera</taxon>
        <taxon>Yangochiroptera</taxon>
        <taxon>Emballonuridae</taxon>
        <taxon>Taphozoinae</taxon>
        <taxon>Taphozous</taxon>
    </lineage>
</organism>
<sequence length="141" mass="15111">VLSPADKTNVKAAWEKVGGHAGDYGAEALERMFLSFPTTKTYFPHFDLSHGSSQVKGHGKKVGDALGNAVAHMDDLPGALSALSDLHAYKLRVDPVNFKLLSHCLLVTLASHHAADFTPAVHASLDKFLASVSTVLTSKYR</sequence>
<reference key="1">
    <citation type="journal article" date="1992" name="Biol. Chem. Hoppe-Seyler">
        <title>The primary structure of the hemoglobin from the tomb bat (Taphozous georgianus, Microchiroptera).</title>
        <authorList>
            <person name="Singer G.A."/>
            <person name="Kleinschmidt T."/>
            <person name="Pettigrew J.D."/>
            <person name="Braunitzer G."/>
        </authorList>
    </citation>
    <scope>PROTEIN SEQUENCE</scope>
</reference>
<proteinExistence type="evidence at protein level"/>
<feature type="chain" id="PRO_0000052777" description="Hemoglobin subunit alpha">
    <location>
        <begin position="1"/>
        <end position="141"/>
    </location>
</feature>
<feature type="peptide" id="PRO_0000455950" description="Hemopressin" evidence="2">
    <location>
        <begin position="95"/>
        <end position="103"/>
    </location>
</feature>
<feature type="domain" description="Globin" evidence="4">
    <location>
        <begin position="1"/>
        <end position="141"/>
    </location>
</feature>
<feature type="binding site" evidence="4">
    <location>
        <position position="58"/>
    </location>
    <ligand>
        <name>O2</name>
        <dbReference type="ChEBI" id="CHEBI:15379"/>
    </ligand>
</feature>
<feature type="binding site" description="proximal binding residue" evidence="4">
    <location>
        <position position="87"/>
    </location>
    <ligand>
        <name>heme b</name>
        <dbReference type="ChEBI" id="CHEBI:60344"/>
    </ligand>
    <ligandPart>
        <name>Fe</name>
        <dbReference type="ChEBI" id="CHEBI:18248"/>
    </ligandPart>
</feature>
<feature type="modified residue" description="Phosphoserine" evidence="3">
    <location>
        <position position="3"/>
    </location>
</feature>
<feature type="modified residue" description="N6-succinyllysine" evidence="1">
    <location>
        <position position="7"/>
    </location>
</feature>
<feature type="modified residue" description="Phosphothreonine" evidence="3">
    <location>
        <position position="8"/>
    </location>
</feature>
<feature type="modified residue" description="N6-succinyllysine" evidence="1">
    <location>
        <position position="11"/>
    </location>
</feature>
<feature type="modified residue" description="N6-acetyllysine; alternate" evidence="3">
    <location>
        <position position="16"/>
    </location>
</feature>
<feature type="modified residue" description="N6-succinyllysine; alternate" evidence="1">
    <location>
        <position position="16"/>
    </location>
</feature>
<feature type="modified residue" description="Phosphotyrosine" evidence="3">
    <location>
        <position position="24"/>
    </location>
</feature>
<feature type="modified residue" description="Phosphoserine" evidence="3">
    <location>
        <position position="35"/>
    </location>
</feature>
<feature type="modified residue" description="N6-succinyllysine" evidence="1">
    <location>
        <position position="40"/>
    </location>
</feature>
<feature type="modified residue" description="Phosphoserine" evidence="3">
    <location>
        <position position="49"/>
    </location>
</feature>
<feature type="modified residue" description="Phosphoserine" evidence="1">
    <location>
        <position position="102"/>
    </location>
</feature>
<feature type="modified residue" description="Phosphothreonine" evidence="1">
    <location>
        <position position="108"/>
    </location>
</feature>
<feature type="modified residue" description="Phosphoserine" evidence="1">
    <location>
        <position position="124"/>
    </location>
</feature>
<feature type="modified residue" description="Phosphoserine" evidence="1">
    <location>
        <position position="131"/>
    </location>
</feature>
<feature type="modified residue" description="Phosphothreonine" evidence="1">
    <location>
        <position position="134"/>
    </location>
</feature>
<feature type="modified residue" description="Phosphothreonine" evidence="1">
    <location>
        <position position="137"/>
    </location>
</feature>
<feature type="modified residue" description="Phosphoserine" evidence="1">
    <location>
        <position position="138"/>
    </location>
</feature>
<comment type="function">
    <text>Involved in oxygen transport from the lung to the various peripheral tissues.</text>
</comment>
<comment type="function">
    <molecule>Hemopressin</molecule>
    <text evidence="2">Hemopressin acts as an antagonist peptide of the cannabinoid receptor CNR1. Hemopressin-binding efficiently blocks cannabinoid receptor CNR1 and subsequent signaling.</text>
</comment>
<comment type="subunit">
    <text>Heterotetramer of two alpha chains and two beta chains.</text>
</comment>
<comment type="tissue specificity">
    <text>Red blood cells.</text>
</comment>
<comment type="similarity">
    <text evidence="4">Belongs to the globin family.</text>
</comment>
<protein>
    <recommendedName>
        <fullName>Hemoglobin subunit alpha</fullName>
    </recommendedName>
    <alternativeName>
        <fullName>Alpha-globin</fullName>
    </alternativeName>
    <alternativeName>
        <fullName>Hemoglobin alpha chain</fullName>
    </alternativeName>
    <component>
        <recommendedName>
            <fullName evidence="2">Hemopressin</fullName>
        </recommendedName>
    </component>
</protein>
<evidence type="ECO:0000250" key="1">
    <source>
        <dbReference type="UniProtKB" id="P01942"/>
    </source>
</evidence>
<evidence type="ECO:0000250" key="2">
    <source>
        <dbReference type="UniProtKB" id="P01946"/>
    </source>
</evidence>
<evidence type="ECO:0000250" key="3">
    <source>
        <dbReference type="UniProtKB" id="P69905"/>
    </source>
</evidence>
<evidence type="ECO:0000255" key="4">
    <source>
        <dbReference type="PROSITE-ProRule" id="PRU00238"/>
    </source>
</evidence>
<name>HBA_TAPGE</name>
<accession>P28780</accession>
<dbReference type="PIR" id="S28934">
    <property type="entry name" value="S28934"/>
</dbReference>
<dbReference type="SMR" id="P28780"/>
<dbReference type="GO" id="GO:0072562">
    <property type="term" value="C:blood microparticle"/>
    <property type="evidence" value="ECO:0007669"/>
    <property type="project" value="TreeGrafter"/>
</dbReference>
<dbReference type="GO" id="GO:0031838">
    <property type="term" value="C:haptoglobin-hemoglobin complex"/>
    <property type="evidence" value="ECO:0007669"/>
    <property type="project" value="TreeGrafter"/>
</dbReference>
<dbReference type="GO" id="GO:0005833">
    <property type="term" value="C:hemoglobin complex"/>
    <property type="evidence" value="ECO:0007669"/>
    <property type="project" value="InterPro"/>
</dbReference>
<dbReference type="GO" id="GO:0031720">
    <property type="term" value="F:haptoglobin binding"/>
    <property type="evidence" value="ECO:0007669"/>
    <property type="project" value="TreeGrafter"/>
</dbReference>
<dbReference type="GO" id="GO:0020037">
    <property type="term" value="F:heme binding"/>
    <property type="evidence" value="ECO:0007669"/>
    <property type="project" value="InterPro"/>
</dbReference>
<dbReference type="GO" id="GO:0005506">
    <property type="term" value="F:iron ion binding"/>
    <property type="evidence" value="ECO:0007669"/>
    <property type="project" value="InterPro"/>
</dbReference>
<dbReference type="GO" id="GO:0043177">
    <property type="term" value="F:organic acid binding"/>
    <property type="evidence" value="ECO:0007669"/>
    <property type="project" value="TreeGrafter"/>
</dbReference>
<dbReference type="GO" id="GO:0019825">
    <property type="term" value="F:oxygen binding"/>
    <property type="evidence" value="ECO:0007669"/>
    <property type="project" value="InterPro"/>
</dbReference>
<dbReference type="GO" id="GO:0005344">
    <property type="term" value="F:oxygen carrier activity"/>
    <property type="evidence" value="ECO:0007669"/>
    <property type="project" value="UniProtKB-KW"/>
</dbReference>
<dbReference type="GO" id="GO:0004601">
    <property type="term" value="F:peroxidase activity"/>
    <property type="evidence" value="ECO:0007669"/>
    <property type="project" value="TreeGrafter"/>
</dbReference>
<dbReference type="GO" id="GO:0042744">
    <property type="term" value="P:hydrogen peroxide catabolic process"/>
    <property type="evidence" value="ECO:0007669"/>
    <property type="project" value="TreeGrafter"/>
</dbReference>
<dbReference type="CDD" id="cd08927">
    <property type="entry name" value="Hb-alpha-like"/>
    <property type="match status" value="1"/>
</dbReference>
<dbReference type="FunFam" id="1.10.490.10:FF:000002">
    <property type="entry name" value="Hemoglobin subunit alpha"/>
    <property type="match status" value="1"/>
</dbReference>
<dbReference type="Gene3D" id="1.10.490.10">
    <property type="entry name" value="Globins"/>
    <property type="match status" value="1"/>
</dbReference>
<dbReference type="InterPro" id="IPR000971">
    <property type="entry name" value="Globin"/>
</dbReference>
<dbReference type="InterPro" id="IPR009050">
    <property type="entry name" value="Globin-like_sf"/>
</dbReference>
<dbReference type="InterPro" id="IPR012292">
    <property type="entry name" value="Globin/Proto"/>
</dbReference>
<dbReference type="InterPro" id="IPR002338">
    <property type="entry name" value="Hemoglobin_a-typ"/>
</dbReference>
<dbReference type="InterPro" id="IPR050056">
    <property type="entry name" value="Hemoglobin_oxygen_transport"/>
</dbReference>
<dbReference type="InterPro" id="IPR002339">
    <property type="entry name" value="Hemoglobin_pi"/>
</dbReference>
<dbReference type="PANTHER" id="PTHR11442">
    <property type="entry name" value="HEMOGLOBIN FAMILY MEMBER"/>
    <property type="match status" value="1"/>
</dbReference>
<dbReference type="PANTHER" id="PTHR11442:SF48">
    <property type="entry name" value="HEMOGLOBIN SUBUNIT ALPHA"/>
    <property type="match status" value="1"/>
</dbReference>
<dbReference type="Pfam" id="PF00042">
    <property type="entry name" value="Globin"/>
    <property type="match status" value="1"/>
</dbReference>
<dbReference type="PRINTS" id="PR00612">
    <property type="entry name" value="ALPHAHAEM"/>
</dbReference>
<dbReference type="PRINTS" id="PR00815">
    <property type="entry name" value="PIHAEM"/>
</dbReference>
<dbReference type="SUPFAM" id="SSF46458">
    <property type="entry name" value="Globin-like"/>
    <property type="match status" value="1"/>
</dbReference>
<dbReference type="PROSITE" id="PS01033">
    <property type="entry name" value="GLOBIN"/>
    <property type="match status" value="1"/>
</dbReference>